<sequence>MSERNQRKVYVGRVVSDKMDKTITVLVETYKKHPLYGKRVKYSKKYKAHDEHNEAKVGDIVKIMETRPLSATKRFRLVEIVEKAVVL</sequence>
<protein>
    <recommendedName>
        <fullName evidence="1">Small ribosomal subunit protein uS17</fullName>
    </recommendedName>
    <alternativeName>
        <fullName evidence="4">30S ribosomal protein S17</fullName>
    </alternativeName>
    <alternativeName>
        <fullName>BS16</fullName>
    </alternativeName>
</protein>
<reference key="1">
    <citation type="journal article" date="1991" name="Biol. Chem. Hoppe-Seyler">
        <title>The amino-acid sequences of the Bacillus stearothermophilus ribosomal proteins S17 and S21 and their comparison to homologous proteins of other ribosomes.</title>
        <authorList>
            <person name="Herfurth E."/>
            <person name="Hirano H."/>
            <person name="Wittmann-Liebold B."/>
        </authorList>
    </citation>
    <scope>PROTEIN SEQUENCE OF 2-87</scope>
    <source>
        <strain>799</strain>
    </source>
</reference>
<reference key="2">
    <citation type="journal article" date="1974" name="FEBS Lett.">
        <title>Procaryotic ribosomal proteins: N-terminal sequence homologies and structural correspondence of 30 S ribosomal proteins from Escherichia coli and Bacillus stearothermophilus.</title>
        <authorList>
            <person name="Yaguchi M."/>
            <person name="Matheson A.T."/>
            <person name="Visentin L.P."/>
        </authorList>
    </citation>
    <scope>PROTEIN SEQUENCE OF 2-16</scope>
    <source>
        <strain>DSM 13240 / CIP 106956 / 10</strain>
    </source>
</reference>
<reference key="3">
    <citation type="journal article" date="1995" name="EMBO J.">
        <title>Protein-rRNA binding features and their structural and functional implications in ribosomes as determined by cross-linking studies.</title>
        <authorList>
            <person name="Urlaub H."/>
            <person name="Kruft V."/>
            <person name="Bischof O."/>
            <person name="Mueller E.-C."/>
            <person name="Wittmann-Liebold B."/>
        </authorList>
    </citation>
    <scope>PROTEIN SEQUENCE OF 22-38</scope>
    <scope>CROSS-LINKING TO RRNA</scope>
    <source>
        <strain>799</strain>
    </source>
</reference>
<reference key="4">
    <citation type="journal article" date="1993" name="Biochemistry">
        <title>Ribosomal protein S17: characterization of the three-dimensional structure by 1H and 15N NMR.</title>
        <authorList>
            <person name="Golden B.L."/>
            <person name="Hoffman D.W."/>
            <person name="Ramakrishnan V."/>
            <person name="White S.W."/>
        </authorList>
    </citation>
    <scope>STRUCTURE BY NMR</scope>
</reference>
<reference key="5">
    <citation type="journal article" date="1996" name="Biochemistry">
        <title>Solution structure of prokaryotic ribosomal protein S17 by high-resolution NMR spectroscopy.</title>
        <authorList>
            <person name="Jaishree T.N."/>
            <person name="Ramakrishnan V."/>
            <person name="White S.W."/>
        </authorList>
    </citation>
    <scope>STRUCTURE BY NMR</scope>
</reference>
<organism>
    <name type="scientific">Geobacillus stearothermophilus</name>
    <name type="common">Bacillus stearothermophilus</name>
    <dbReference type="NCBI Taxonomy" id="1422"/>
    <lineage>
        <taxon>Bacteria</taxon>
        <taxon>Bacillati</taxon>
        <taxon>Bacillota</taxon>
        <taxon>Bacilli</taxon>
        <taxon>Bacillales</taxon>
        <taxon>Anoxybacillaceae</taxon>
        <taxon>Geobacillus</taxon>
    </lineage>
</organism>
<proteinExistence type="evidence at protein level"/>
<gene>
    <name evidence="1" type="primary">rpsQ</name>
</gene>
<name>RS17_GEOSE</name>
<accession>P23828</accession>
<comment type="function">
    <text>One of the primary rRNA binding proteins, it binds specifically to the 5'-end of 16S ribosomal RNA.</text>
</comment>
<comment type="subunit">
    <text>Part of the 30S ribosomal subunit.</text>
</comment>
<comment type="similarity">
    <text evidence="1">Belongs to the universal ribosomal protein uS17 family.</text>
</comment>
<dbReference type="PIR" id="S17865">
    <property type="entry name" value="S17865"/>
</dbReference>
<dbReference type="RefSeq" id="WP_033008672.1">
    <property type="nucleotide sequence ID" value="NZ_RCTK01000011.1"/>
</dbReference>
<dbReference type="PDB" id="1RIP">
    <property type="method" value="NMR"/>
    <property type="chains" value="A=6-85"/>
</dbReference>
<dbReference type="PDBsum" id="1RIP"/>
<dbReference type="SMR" id="P23828"/>
<dbReference type="IntAct" id="P23828">
    <property type="interactions" value="1"/>
</dbReference>
<dbReference type="GeneID" id="89612891"/>
<dbReference type="OrthoDB" id="9811714at2"/>
<dbReference type="EvolutionaryTrace" id="P23828"/>
<dbReference type="GO" id="GO:0022627">
    <property type="term" value="C:cytosolic small ribosomal subunit"/>
    <property type="evidence" value="ECO:0007669"/>
    <property type="project" value="TreeGrafter"/>
</dbReference>
<dbReference type="GO" id="GO:0019843">
    <property type="term" value="F:rRNA binding"/>
    <property type="evidence" value="ECO:0007669"/>
    <property type="project" value="UniProtKB-UniRule"/>
</dbReference>
<dbReference type="GO" id="GO:0003735">
    <property type="term" value="F:structural constituent of ribosome"/>
    <property type="evidence" value="ECO:0007669"/>
    <property type="project" value="InterPro"/>
</dbReference>
<dbReference type="GO" id="GO:0006412">
    <property type="term" value="P:translation"/>
    <property type="evidence" value="ECO:0007669"/>
    <property type="project" value="UniProtKB-UniRule"/>
</dbReference>
<dbReference type="CDD" id="cd00364">
    <property type="entry name" value="Ribosomal_uS17"/>
    <property type="match status" value="1"/>
</dbReference>
<dbReference type="FunFam" id="2.40.50.140:FF:000026">
    <property type="entry name" value="30S ribosomal protein S17"/>
    <property type="match status" value="1"/>
</dbReference>
<dbReference type="Gene3D" id="2.40.50.140">
    <property type="entry name" value="Nucleic acid-binding proteins"/>
    <property type="match status" value="1"/>
</dbReference>
<dbReference type="HAMAP" id="MF_01345_B">
    <property type="entry name" value="Ribosomal_uS17_B"/>
    <property type="match status" value="1"/>
</dbReference>
<dbReference type="InterPro" id="IPR012340">
    <property type="entry name" value="NA-bd_OB-fold"/>
</dbReference>
<dbReference type="InterPro" id="IPR000266">
    <property type="entry name" value="Ribosomal_uS17"/>
</dbReference>
<dbReference type="InterPro" id="IPR019984">
    <property type="entry name" value="Ribosomal_uS17_bact/chlr"/>
</dbReference>
<dbReference type="InterPro" id="IPR019979">
    <property type="entry name" value="Ribosomal_uS17_CS"/>
</dbReference>
<dbReference type="NCBIfam" id="NF004123">
    <property type="entry name" value="PRK05610.1"/>
    <property type="match status" value="1"/>
</dbReference>
<dbReference type="NCBIfam" id="TIGR03635">
    <property type="entry name" value="uS17_bact"/>
    <property type="match status" value="1"/>
</dbReference>
<dbReference type="PANTHER" id="PTHR10744">
    <property type="entry name" value="40S RIBOSOMAL PROTEIN S11 FAMILY MEMBER"/>
    <property type="match status" value="1"/>
</dbReference>
<dbReference type="PANTHER" id="PTHR10744:SF1">
    <property type="entry name" value="SMALL RIBOSOMAL SUBUNIT PROTEIN US17M"/>
    <property type="match status" value="1"/>
</dbReference>
<dbReference type="Pfam" id="PF00366">
    <property type="entry name" value="Ribosomal_S17"/>
    <property type="match status" value="1"/>
</dbReference>
<dbReference type="PRINTS" id="PR00973">
    <property type="entry name" value="RIBOSOMALS17"/>
</dbReference>
<dbReference type="SUPFAM" id="SSF50249">
    <property type="entry name" value="Nucleic acid-binding proteins"/>
    <property type="match status" value="1"/>
</dbReference>
<dbReference type="PROSITE" id="PS00056">
    <property type="entry name" value="RIBOSOMAL_S17"/>
    <property type="match status" value="1"/>
</dbReference>
<evidence type="ECO:0000255" key="1">
    <source>
        <dbReference type="HAMAP-Rule" id="MF_01345"/>
    </source>
</evidence>
<evidence type="ECO:0000269" key="2">
    <source>
    </source>
</evidence>
<evidence type="ECO:0000269" key="3">
    <source>
    </source>
</evidence>
<evidence type="ECO:0000305" key="4"/>
<evidence type="ECO:0007829" key="5">
    <source>
        <dbReference type="PDB" id="1RIP"/>
    </source>
</evidence>
<feature type="initiator methionine" description="Removed" evidence="2 3">
    <location>
        <position position="1"/>
    </location>
</feature>
<feature type="chain" id="PRO_0000128446" description="Small ribosomal subunit protein uS17">
    <location>
        <begin position="2"/>
        <end position="87"/>
    </location>
</feature>
<feature type="sequence variant" description="In strain: 10.">
    <original>E</original>
    <variation>Q</variation>
    <location>
        <position position="3"/>
    </location>
</feature>
<feature type="sequence variant" description="In strain: 10.">
    <original>S</original>
    <variation>G</variation>
    <location>
        <position position="16"/>
    </location>
</feature>
<feature type="strand" evidence="5">
    <location>
        <begin position="13"/>
        <end position="15"/>
    </location>
</feature>
<feature type="strand" evidence="5">
    <location>
        <begin position="19"/>
        <end position="21"/>
    </location>
</feature>
<feature type="strand" evidence="5">
    <location>
        <begin position="36"/>
        <end position="38"/>
    </location>
</feature>
<feature type="strand" evidence="5">
    <location>
        <begin position="69"/>
        <end position="71"/>
    </location>
</feature>
<feature type="strand" evidence="5">
    <location>
        <begin position="81"/>
        <end position="84"/>
    </location>
</feature>
<keyword id="KW-0002">3D-structure</keyword>
<keyword id="KW-0903">Direct protein sequencing</keyword>
<keyword id="KW-0687">Ribonucleoprotein</keyword>
<keyword id="KW-0689">Ribosomal protein</keyword>
<keyword id="KW-0694">RNA-binding</keyword>
<keyword id="KW-0699">rRNA-binding</keyword>